<accession>Q8CR04</accession>
<reference key="1">
    <citation type="journal article" date="2003" name="Mol. Microbiol.">
        <title>Genome-based analysis of virulence genes in a non-biofilm-forming Staphylococcus epidermidis strain (ATCC 12228).</title>
        <authorList>
            <person name="Zhang Y.-Q."/>
            <person name="Ren S.-X."/>
            <person name="Li H.-L."/>
            <person name="Wang Y.-X."/>
            <person name="Fu G."/>
            <person name="Yang J."/>
            <person name="Qin Z.-Q."/>
            <person name="Miao Y.-G."/>
            <person name="Wang W.-Y."/>
            <person name="Chen R.-S."/>
            <person name="Shen Y."/>
            <person name="Chen Z."/>
            <person name="Yuan Z.-H."/>
            <person name="Zhao G.-P."/>
            <person name="Qu D."/>
            <person name="Danchin A."/>
            <person name="Wen Y.-M."/>
        </authorList>
    </citation>
    <scope>NUCLEOTIDE SEQUENCE [LARGE SCALE GENOMIC DNA]</scope>
    <source>
        <strain>ATCC 12228 / FDA PCI 1200</strain>
    </source>
</reference>
<name>CYSC_STAES</name>
<protein>
    <recommendedName>
        <fullName evidence="1">Adenylyl-sulfate kinase</fullName>
        <ecNumber evidence="1">2.7.1.25</ecNumber>
    </recommendedName>
    <alternativeName>
        <fullName evidence="1">APS kinase</fullName>
    </alternativeName>
    <alternativeName>
        <fullName evidence="1">ATP adenosine-5'-phosphosulfate 3'-phosphotransferase</fullName>
    </alternativeName>
    <alternativeName>
        <fullName evidence="1">Adenosine-5'-phosphosulfate kinase</fullName>
    </alternativeName>
</protein>
<feature type="chain" id="PRO_0000105919" description="Adenylyl-sulfate kinase">
    <location>
        <begin position="1"/>
        <end position="199"/>
    </location>
</feature>
<feature type="region of interest" description="Disordered" evidence="2">
    <location>
        <begin position="1"/>
        <end position="22"/>
    </location>
</feature>
<feature type="active site" description="Phosphoserine intermediate" evidence="1">
    <location>
        <position position="108"/>
    </location>
</feature>
<feature type="binding site" evidence="1">
    <location>
        <begin position="34"/>
        <end position="41"/>
    </location>
    <ligand>
        <name>ATP</name>
        <dbReference type="ChEBI" id="CHEBI:30616"/>
    </ligand>
</feature>
<organism>
    <name type="scientific">Staphylococcus epidermidis (strain ATCC 12228 / FDA PCI 1200)</name>
    <dbReference type="NCBI Taxonomy" id="176280"/>
    <lineage>
        <taxon>Bacteria</taxon>
        <taxon>Bacillati</taxon>
        <taxon>Bacillota</taxon>
        <taxon>Bacilli</taxon>
        <taxon>Bacillales</taxon>
        <taxon>Staphylococcaceae</taxon>
        <taxon>Staphylococcus</taxon>
    </lineage>
</organism>
<comment type="function">
    <text evidence="1">Catalyzes the synthesis of activated sulfate.</text>
</comment>
<comment type="catalytic activity">
    <reaction evidence="1">
        <text>adenosine 5'-phosphosulfate + ATP = 3'-phosphoadenylyl sulfate + ADP + H(+)</text>
        <dbReference type="Rhea" id="RHEA:24152"/>
        <dbReference type="ChEBI" id="CHEBI:15378"/>
        <dbReference type="ChEBI" id="CHEBI:30616"/>
        <dbReference type="ChEBI" id="CHEBI:58243"/>
        <dbReference type="ChEBI" id="CHEBI:58339"/>
        <dbReference type="ChEBI" id="CHEBI:456216"/>
        <dbReference type="EC" id="2.7.1.25"/>
    </reaction>
</comment>
<comment type="pathway">
    <text evidence="1">Sulfur metabolism; hydrogen sulfide biosynthesis; sulfite from sulfate: step 2/3.</text>
</comment>
<comment type="similarity">
    <text evidence="1">Belongs to the APS kinase family.</text>
</comment>
<dbReference type="EC" id="2.7.1.25" evidence="1"/>
<dbReference type="EMBL" id="AE015929">
    <property type="protein sequence ID" value="AAO05816.1"/>
    <property type="molecule type" value="Genomic_DNA"/>
</dbReference>
<dbReference type="RefSeq" id="NP_765729.1">
    <property type="nucleotide sequence ID" value="NC_004461.1"/>
</dbReference>
<dbReference type="RefSeq" id="WP_002468764.1">
    <property type="nucleotide sequence ID" value="NZ_WBME01000005.1"/>
</dbReference>
<dbReference type="SMR" id="Q8CR04"/>
<dbReference type="KEGG" id="sep:SE_2174"/>
<dbReference type="PATRIC" id="fig|176280.10.peg.2123"/>
<dbReference type="eggNOG" id="COG0529">
    <property type="taxonomic scope" value="Bacteria"/>
</dbReference>
<dbReference type="HOGENOM" id="CLU_046932_1_0_9"/>
<dbReference type="OrthoDB" id="9804504at2"/>
<dbReference type="UniPathway" id="UPA00140">
    <property type="reaction ID" value="UER00205"/>
</dbReference>
<dbReference type="Proteomes" id="UP000001411">
    <property type="component" value="Chromosome"/>
</dbReference>
<dbReference type="GO" id="GO:0004020">
    <property type="term" value="F:adenylylsulfate kinase activity"/>
    <property type="evidence" value="ECO:0007669"/>
    <property type="project" value="UniProtKB-UniRule"/>
</dbReference>
<dbReference type="GO" id="GO:0005524">
    <property type="term" value="F:ATP binding"/>
    <property type="evidence" value="ECO:0007669"/>
    <property type="project" value="UniProtKB-UniRule"/>
</dbReference>
<dbReference type="GO" id="GO:0070814">
    <property type="term" value="P:hydrogen sulfide biosynthetic process"/>
    <property type="evidence" value="ECO:0007669"/>
    <property type="project" value="UniProtKB-UniRule"/>
</dbReference>
<dbReference type="GO" id="GO:0000103">
    <property type="term" value="P:sulfate assimilation"/>
    <property type="evidence" value="ECO:0007669"/>
    <property type="project" value="UniProtKB-UniRule"/>
</dbReference>
<dbReference type="CDD" id="cd02027">
    <property type="entry name" value="APSK"/>
    <property type="match status" value="1"/>
</dbReference>
<dbReference type="FunFam" id="3.40.50.300:FF:000212">
    <property type="entry name" value="Adenylyl-sulfate kinase"/>
    <property type="match status" value="1"/>
</dbReference>
<dbReference type="Gene3D" id="3.40.50.300">
    <property type="entry name" value="P-loop containing nucleotide triphosphate hydrolases"/>
    <property type="match status" value="1"/>
</dbReference>
<dbReference type="HAMAP" id="MF_00065">
    <property type="entry name" value="Adenylyl_sulf_kinase"/>
    <property type="match status" value="1"/>
</dbReference>
<dbReference type="InterPro" id="IPR002891">
    <property type="entry name" value="APS_kinase"/>
</dbReference>
<dbReference type="InterPro" id="IPR027417">
    <property type="entry name" value="P-loop_NTPase"/>
</dbReference>
<dbReference type="NCBIfam" id="TIGR00455">
    <property type="entry name" value="apsK"/>
    <property type="match status" value="1"/>
</dbReference>
<dbReference type="NCBIfam" id="NF003013">
    <property type="entry name" value="PRK03846.1"/>
    <property type="match status" value="1"/>
</dbReference>
<dbReference type="PANTHER" id="PTHR11055">
    <property type="entry name" value="BIFUNCTIONAL 3'-PHOSPHOADENOSINE 5'-PHOSPHOSULFATE SYNTHASE"/>
    <property type="match status" value="1"/>
</dbReference>
<dbReference type="PANTHER" id="PTHR11055:SF1">
    <property type="entry name" value="PAPS SYNTHETASE, ISOFORM D"/>
    <property type="match status" value="1"/>
</dbReference>
<dbReference type="Pfam" id="PF01583">
    <property type="entry name" value="APS_kinase"/>
    <property type="match status" value="1"/>
</dbReference>
<dbReference type="SUPFAM" id="SSF52540">
    <property type="entry name" value="P-loop containing nucleoside triphosphate hydrolases"/>
    <property type="match status" value="1"/>
</dbReference>
<keyword id="KW-0067">ATP-binding</keyword>
<keyword id="KW-0418">Kinase</keyword>
<keyword id="KW-0547">Nucleotide-binding</keyword>
<keyword id="KW-0597">Phosphoprotein</keyword>
<keyword id="KW-0808">Transferase</keyword>
<gene>
    <name evidence="1" type="primary">cysC</name>
    <name type="ordered locus">SE_2174</name>
</gene>
<proteinExistence type="inferred from homology"/>
<evidence type="ECO:0000255" key="1">
    <source>
        <dbReference type="HAMAP-Rule" id="MF_00065"/>
    </source>
</evidence>
<evidence type="ECO:0000256" key="2">
    <source>
        <dbReference type="SAM" id="MobiDB-lite"/>
    </source>
</evidence>
<sequence length="199" mass="22628">MSESNHITWHDSEVTKKQRQHKNGHKSAVIWFTGLSGSGKSTVSVALEKELFNEGKQTYRLDGDNVRHGLNKNLGFSPEDRSENIRRIGEVAKLMVDAGALTVTAFISPYKEDREGVRALLEDNEFIEVYTKCSVEECEKRDPKGLYKKARSGEIPEFTGISAPYQAPENPEITIDTEHDTIEQSVEQIIRYLKEHEYI</sequence>